<sequence>MINRIKISQVIVAEGRDDTTNLKRYFDVETYETRWSAINDQDIERIQRLHELHGVIVFTDPDFNDERIRRMIITVIPTVQHVFLKRDEAVPKSKTKGRSLGIEHASYEDLKTALAQVTEQFKNENEFDISRSDLIRLGFLAGADSRKRREYLGEQLRIGYSNGKQLLKRLELFGVTLAEVKEAMTKYSI</sequence>
<proteinExistence type="inferred from homology"/>
<evidence type="ECO:0000255" key="1">
    <source>
        <dbReference type="HAMAP-Rule" id="MF_01469"/>
    </source>
</evidence>
<reference key="1">
    <citation type="journal article" date="2010" name="J. Bacteriol.">
        <title>Complete genome sequence of Lactobacillus salivarius CECT 5713, a probiotic strain isolated from human milk and infant feces.</title>
        <authorList>
            <person name="Jimenez E."/>
            <person name="Martin R."/>
            <person name="Maldonado A."/>
            <person name="Martin V."/>
            <person name="Gomez de Segura A."/>
            <person name="Fernandez L."/>
            <person name="Rodriguez J.M."/>
        </authorList>
    </citation>
    <scope>NUCLEOTIDE SEQUENCE [LARGE SCALE GENOMIC DNA]</scope>
    <source>
        <strain>CECT 5713</strain>
    </source>
</reference>
<keyword id="KW-0963">Cytoplasm</keyword>
<keyword id="KW-0255">Endonuclease</keyword>
<keyword id="KW-0378">Hydrolase</keyword>
<keyword id="KW-0460">Magnesium</keyword>
<keyword id="KW-0479">Metal-binding</keyword>
<keyword id="KW-0540">Nuclease</keyword>
<keyword id="KW-0690">Ribosome biogenesis</keyword>
<keyword id="KW-0694">RNA-binding</keyword>
<keyword id="KW-0698">rRNA processing</keyword>
<keyword id="KW-0699">rRNA-binding</keyword>
<protein>
    <recommendedName>
        <fullName evidence="1">Ribonuclease M5 2</fullName>
        <ecNumber evidence="1">3.1.26.8</ecNumber>
    </recommendedName>
    <alternativeName>
        <fullName evidence="1">RNase M5 2</fullName>
    </alternativeName>
    <alternativeName>
        <fullName evidence="1">Ribosomal RNA terminal maturase M5 2</fullName>
    </alternativeName>
</protein>
<feature type="chain" id="PRO_0000416750" description="Ribonuclease M5 2">
    <location>
        <begin position="1"/>
        <end position="189"/>
    </location>
</feature>
<feature type="domain" description="Toprim" evidence="1">
    <location>
        <begin position="8"/>
        <end position="91"/>
    </location>
</feature>
<feature type="binding site" evidence="1">
    <location>
        <position position="14"/>
    </location>
    <ligand>
        <name>Mg(2+)</name>
        <dbReference type="ChEBI" id="CHEBI:18420"/>
        <label>1</label>
        <note>catalytic</note>
    </ligand>
</feature>
<feature type="binding site" evidence="1">
    <location>
        <position position="60"/>
    </location>
    <ligand>
        <name>Mg(2+)</name>
        <dbReference type="ChEBI" id="CHEBI:18420"/>
        <label>1</label>
        <note>catalytic</note>
    </ligand>
</feature>
<feature type="binding site" evidence="1">
    <location>
        <position position="60"/>
    </location>
    <ligand>
        <name>Mg(2+)</name>
        <dbReference type="ChEBI" id="CHEBI:18420"/>
        <label>2</label>
    </ligand>
</feature>
<feature type="binding site" evidence="1">
    <location>
        <position position="62"/>
    </location>
    <ligand>
        <name>Mg(2+)</name>
        <dbReference type="ChEBI" id="CHEBI:18420"/>
        <label>2</label>
    </ligand>
</feature>
<gene>
    <name evidence="1" type="primary">rnmV2</name>
    <name type="ordered locus">HN6_01176</name>
</gene>
<organism>
    <name type="scientific">Ligilactobacillus salivarius (strain CECT 5713)</name>
    <name type="common">Lactobacillus salivarius</name>
    <dbReference type="NCBI Taxonomy" id="712961"/>
    <lineage>
        <taxon>Bacteria</taxon>
        <taxon>Bacillati</taxon>
        <taxon>Bacillota</taxon>
        <taxon>Bacilli</taxon>
        <taxon>Lactobacillales</taxon>
        <taxon>Lactobacillaceae</taxon>
        <taxon>Ligilactobacillus</taxon>
    </lineage>
</organism>
<comment type="function">
    <text evidence="1">Required for correct processing of both the 5' and 3' ends of 5S rRNA precursor. Cleaves both sides of a double-stranded region yielding mature 5S rRNA in one step.</text>
</comment>
<comment type="catalytic activity">
    <reaction evidence="1">
        <text>Endonucleolytic cleavage of RNA, removing 21 and 42 nucleotides, respectively, from the 5'- and 3'-termini of a 5S-rRNA precursor.</text>
        <dbReference type="EC" id="3.1.26.8"/>
    </reaction>
</comment>
<comment type="cofactor">
    <cofactor evidence="1">
        <name>Mg(2+)</name>
        <dbReference type="ChEBI" id="CHEBI:18420"/>
    </cofactor>
    <text evidence="1">Binds two Mg(2+) per subunit.</text>
</comment>
<comment type="subcellular location">
    <subcellularLocation>
        <location evidence="1">Cytoplasm</location>
    </subcellularLocation>
</comment>
<comment type="similarity">
    <text evidence="1">Belongs to the ribonuclease M5 family.</text>
</comment>
<name>RNM52_LIGS5</name>
<accession>D8IMC7</accession>
<dbReference type="EC" id="3.1.26.8" evidence="1"/>
<dbReference type="EMBL" id="CP002034">
    <property type="protein sequence ID" value="ADJ79429.1"/>
    <property type="molecule type" value="Genomic_DNA"/>
</dbReference>
<dbReference type="RefSeq" id="WP_011476328.1">
    <property type="nucleotide sequence ID" value="NC_017481.1"/>
</dbReference>
<dbReference type="SMR" id="D8IMC7"/>
<dbReference type="KEGG" id="lsi:HN6_01176"/>
<dbReference type="PATRIC" id="fig|712961.3.peg.1166"/>
<dbReference type="HOGENOM" id="CLU_109405_0_0_9"/>
<dbReference type="GO" id="GO:0005737">
    <property type="term" value="C:cytoplasm"/>
    <property type="evidence" value="ECO:0007669"/>
    <property type="project" value="UniProtKB-SubCell"/>
</dbReference>
<dbReference type="GO" id="GO:0046872">
    <property type="term" value="F:metal ion binding"/>
    <property type="evidence" value="ECO:0007669"/>
    <property type="project" value="UniProtKB-KW"/>
</dbReference>
<dbReference type="GO" id="GO:0043822">
    <property type="term" value="F:ribonuclease M5 activity"/>
    <property type="evidence" value="ECO:0007669"/>
    <property type="project" value="UniProtKB-UniRule"/>
</dbReference>
<dbReference type="GO" id="GO:0019843">
    <property type="term" value="F:rRNA binding"/>
    <property type="evidence" value="ECO:0007669"/>
    <property type="project" value="UniProtKB-KW"/>
</dbReference>
<dbReference type="GO" id="GO:0006364">
    <property type="term" value="P:rRNA processing"/>
    <property type="evidence" value="ECO:0007669"/>
    <property type="project" value="UniProtKB-UniRule"/>
</dbReference>
<dbReference type="CDD" id="cd01027">
    <property type="entry name" value="TOPRIM_RNase_M5_like"/>
    <property type="match status" value="1"/>
</dbReference>
<dbReference type="FunFam" id="3.40.1360.10:FF:000006">
    <property type="entry name" value="Ribonuclease M5"/>
    <property type="match status" value="1"/>
</dbReference>
<dbReference type="Gene3D" id="3.40.1360.10">
    <property type="match status" value="1"/>
</dbReference>
<dbReference type="HAMAP" id="MF_01469">
    <property type="entry name" value="RNase_M5"/>
    <property type="match status" value="1"/>
</dbReference>
<dbReference type="InterPro" id="IPR004466">
    <property type="entry name" value="RNase_M5"/>
</dbReference>
<dbReference type="InterPro" id="IPR025156">
    <property type="entry name" value="RNase_M5_C"/>
</dbReference>
<dbReference type="InterPro" id="IPR006171">
    <property type="entry name" value="TOPRIM_dom"/>
</dbReference>
<dbReference type="InterPro" id="IPR034141">
    <property type="entry name" value="TOPRIM_RNase_M5-like"/>
</dbReference>
<dbReference type="NCBIfam" id="TIGR00334">
    <property type="entry name" value="5S_RNA_mat_M5"/>
    <property type="match status" value="1"/>
</dbReference>
<dbReference type="PANTHER" id="PTHR39156">
    <property type="entry name" value="RIBONUCLEASE M5"/>
    <property type="match status" value="1"/>
</dbReference>
<dbReference type="PANTHER" id="PTHR39156:SF1">
    <property type="entry name" value="RIBONUCLEASE M5"/>
    <property type="match status" value="1"/>
</dbReference>
<dbReference type="Pfam" id="PF13331">
    <property type="entry name" value="DUF4093"/>
    <property type="match status" value="1"/>
</dbReference>
<dbReference type="SUPFAM" id="SSF110455">
    <property type="entry name" value="Toprim domain"/>
    <property type="match status" value="1"/>
</dbReference>
<dbReference type="PROSITE" id="PS50880">
    <property type="entry name" value="TOPRIM"/>
    <property type="match status" value="1"/>
</dbReference>